<protein>
    <recommendedName>
        <fullName evidence="1">Ribosome maturation factor RimP</fullName>
    </recommendedName>
</protein>
<comment type="function">
    <text evidence="1">Required for maturation of 30S ribosomal subunits.</text>
</comment>
<comment type="subcellular location">
    <subcellularLocation>
        <location evidence="1">Cytoplasm</location>
    </subcellularLocation>
</comment>
<comment type="similarity">
    <text evidence="1">Belongs to the RimP family.</text>
</comment>
<accession>A1JIW7</accession>
<dbReference type="EMBL" id="AM286415">
    <property type="protein sequence ID" value="CAL10558.1"/>
    <property type="molecule type" value="Genomic_DNA"/>
</dbReference>
<dbReference type="SMR" id="A1JIW7"/>
<dbReference type="KEGG" id="yen:YE0432"/>
<dbReference type="eggNOG" id="COG0779">
    <property type="taxonomic scope" value="Bacteria"/>
</dbReference>
<dbReference type="HOGENOM" id="CLU_070525_1_1_6"/>
<dbReference type="Proteomes" id="UP000000642">
    <property type="component" value="Chromosome"/>
</dbReference>
<dbReference type="GO" id="GO:0005829">
    <property type="term" value="C:cytosol"/>
    <property type="evidence" value="ECO:0007669"/>
    <property type="project" value="TreeGrafter"/>
</dbReference>
<dbReference type="GO" id="GO:0000028">
    <property type="term" value="P:ribosomal small subunit assembly"/>
    <property type="evidence" value="ECO:0007669"/>
    <property type="project" value="TreeGrafter"/>
</dbReference>
<dbReference type="GO" id="GO:0006412">
    <property type="term" value="P:translation"/>
    <property type="evidence" value="ECO:0007669"/>
    <property type="project" value="TreeGrafter"/>
</dbReference>
<dbReference type="CDD" id="cd01734">
    <property type="entry name" value="YlxS_C"/>
    <property type="match status" value="1"/>
</dbReference>
<dbReference type="FunFam" id="2.30.30.180:FF:000001">
    <property type="entry name" value="Ribosome maturation factor RimP"/>
    <property type="match status" value="1"/>
</dbReference>
<dbReference type="FunFam" id="3.30.300.70:FF:000001">
    <property type="entry name" value="Ribosome maturation factor RimP"/>
    <property type="match status" value="1"/>
</dbReference>
<dbReference type="Gene3D" id="2.30.30.180">
    <property type="entry name" value="Ribosome maturation factor RimP, C-terminal domain"/>
    <property type="match status" value="1"/>
</dbReference>
<dbReference type="Gene3D" id="3.30.300.70">
    <property type="entry name" value="RimP-like superfamily, N-terminal"/>
    <property type="match status" value="1"/>
</dbReference>
<dbReference type="HAMAP" id="MF_01077">
    <property type="entry name" value="RimP"/>
    <property type="match status" value="1"/>
</dbReference>
<dbReference type="InterPro" id="IPR003728">
    <property type="entry name" value="Ribosome_maturation_RimP"/>
</dbReference>
<dbReference type="InterPro" id="IPR028998">
    <property type="entry name" value="RimP_C"/>
</dbReference>
<dbReference type="InterPro" id="IPR036847">
    <property type="entry name" value="RimP_C_sf"/>
</dbReference>
<dbReference type="InterPro" id="IPR028989">
    <property type="entry name" value="RimP_N"/>
</dbReference>
<dbReference type="InterPro" id="IPR035956">
    <property type="entry name" value="RimP_N_sf"/>
</dbReference>
<dbReference type="NCBIfam" id="NF000927">
    <property type="entry name" value="PRK00092.1-1"/>
    <property type="match status" value="1"/>
</dbReference>
<dbReference type="PANTHER" id="PTHR33867">
    <property type="entry name" value="RIBOSOME MATURATION FACTOR RIMP"/>
    <property type="match status" value="1"/>
</dbReference>
<dbReference type="PANTHER" id="PTHR33867:SF1">
    <property type="entry name" value="RIBOSOME MATURATION FACTOR RIMP"/>
    <property type="match status" value="1"/>
</dbReference>
<dbReference type="Pfam" id="PF17384">
    <property type="entry name" value="DUF150_C"/>
    <property type="match status" value="1"/>
</dbReference>
<dbReference type="Pfam" id="PF02576">
    <property type="entry name" value="RimP_N"/>
    <property type="match status" value="1"/>
</dbReference>
<dbReference type="SUPFAM" id="SSF74942">
    <property type="entry name" value="YhbC-like, C-terminal domain"/>
    <property type="match status" value="1"/>
</dbReference>
<dbReference type="SUPFAM" id="SSF75420">
    <property type="entry name" value="YhbC-like, N-terminal domain"/>
    <property type="match status" value="1"/>
</dbReference>
<feature type="chain" id="PRO_1000064797" description="Ribosome maturation factor RimP">
    <location>
        <begin position="1"/>
        <end position="152"/>
    </location>
</feature>
<evidence type="ECO:0000255" key="1">
    <source>
        <dbReference type="HAMAP-Rule" id="MF_01077"/>
    </source>
</evidence>
<reference key="1">
    <citation type="journal article" date="2006" name="PLoS Genet.">
        <title>The complete genome sequence and comparative genome analysis of the high pathogenicity Yersinia enterocolitica strain 8081.</title>
        <authorList>
            <person name="Thomson N.R."/>
            <person name="Howard S."/>
            <person name="Wren B.W."/>
            <person name="Holden M.T.G."/>
            <person name="Crossman L."/>
            <person name="Challis G.L."/>
            <person name="Churcher C."/>
            <person name="Mungall K."/>
            <person name="Brooks K."/>
            <person name="Chillingworth T."/>
            <person name="Feltwell T."/>
            <person name="Abdellah Z."/>
            <person name="Hauser H."/>
            <person name="Jagels K."/>
            <person name="Maddison M."/>
            <person name="Moule S."/>
            <person name="Sanders M."/>
            <person name="Whitehead S."/>
            <person name="Quail M.A."/>
            <person name="Dougan G."/>
            <person name="Parkhill J."/>
            <person name="Prentice M.B."/>
        </authorList>
    </citation>
    <scope>NUCLEOTIDE SEQUENCE [LARGE SCALE GENOMIC DNA]</scope>
    <source>
        <strain>NCTC 13174 / 8081</strain>
    </source>
</reference>
<gene>
    <name evidence="1" type="primary">rimP</name>
    <name type="ordered locus">YE0432</name>
</gene>
<organism>
    <name type="scientific">Yersinia enterocolitica serotype O:8 / biotype 1B (strain NCTC 13174 / 8081)</name>
    <dbReference type="NCBI Taxonomy" id="393305"/>
    <lineage>
        <taxon>Bacteria</taxon>
        <taxon>Pseudomonadati</taxon>
        <taxon>Pseudomonadota</taxon>
        <taxon>Gammaproteobacteria</taxon>
        <taxon>Enterobacterales</taxon>
        <taxon>Yersiniaceae</taxon>
        <taxon>Yersinia</taxon>
    </lineage>
</organism>
<name>RIMP_YERE8</name>
<keyword id="KW-0963">Cytoplasm</keyword>
<keyword id="KW-0690">Ribosome biogenesis</keyword>
<proteinExistence type="inferred from homology"/>
<sequence length="152" mass="16885">MGLSTLEQKLTEIISAPVEALGYELVGIEFIRGRQSTLRIYIDSDDGITVDACADVSHQVSAVLDVEDPITVAYNLEVSSPGLERPMFTAEHYTRYLGEEVTLVLRMAMQNRRKWQGIIKAVDGEMITVTVDGKDEVFALSNIQKANLVPHF</sequence>